<protein>
    <recommendedName>
        <fullName>ATP synthase subunit a</fullName>
    </recommendedName>
    <alternativeName>
        <fullName>F-ATPase protein 6</fullName>
    </alternativeName>
</protein>
<sequence>MMVSLFSQFDSPWLLNIPLVLLALIMPWKLFVSFGPSWAGTRSSRLVYATMETLMSQVMQPLNKLGFRWVVLFSSLMLMLMTLNVIGLFPYTFTPTTQLSMNLGLAVPLWLGTVVYGFRNHPVIALAHLCPEGAPNLLVPVLVVVETLSILMRPLALGLRLTANLTAGHLLMHLISSAVLGLMELSVMLSGITLLLLVFLTMLEIAVALIQGYVFAILVTLYLDENL</sequence>
<feature type="chain" id="PRO_0000082095" description="ATP synthase subunit a">
    <location>
        <begin position="1"/>
        <end position="227"/>
    </location>
</feature>
<feature type="transmembrane region" description="Helical" evidence="2">
    <location>
        <begin position="14"/>
        <end position="34"/>
    </location>
</feature>
<feature type="transmembrane region" description="Helical" evidence="2">
    <location>
        <begin position="69"/>
        <end position="89"/>
    </location>
</feature>
<feature type="transmembrane region" description="Helical" evidence="2">
    <location>
        <begin position="98"/>
        <end position="118"/>
    </location>
</feature>
<feature type="transmembrane region" description="Helical" evidence="2">
    <location>
        <begin position="137"/>
        <end position="157"/>
    </location>
</feature>
<feature type="transmembrane region" description="Helical" evidence="2">
    <location>
        <begin position="169"/>
        <end position="189"/>
    </location>
</feature>
<feature type="transmembrane region" description="Helical" evidence="2">
    <location>
        <begin position="205"/>
        <end position="223"/>
    </location>
</feature>
<gene>
    <name type="primary">ATP6</name>
    <name type="synonym">ATPASE6</name>
</gene>
<geneLocation type="mitochondrion"/>
<reference key="1">
    <citation type="journal article" date="1999" name="Mol. Biol. Evol.">
        <title>Complete sequence, gene arrangement, and genetic code of mitochondrial DNA of the cephalochordate Branchiostoma floridae (Amphioxus).</title>
        <authorList>
            <person name="Boore J.L."/>
            <person name="Daehler L.L."/>
            <person name="Brown W.M."/>
        </authorList>
    </citation>
    <scope>NUCLEOTIDE SEQUENCE [LARGE SCALE GENOMIC DNA]</scope>
    <source>
        <strain evidence="4">S238N-H82</strain>
    </source>
</reference>
<name>ATP6_BRAFL</name>
<accession>O47426</accession>
<dbReference type="EMBL" id="AF098298">
    <property type="protein sequence ID" value="AAB87995.1"/>
    <property type="molecule type" value="Genomic_DNA"/>
</dbReference>
<dbReference type="RefSeq" id="NP_007760.1">
    <property type="nucleotide sequence ID" value="NC_000834.1"/>
</dbReference>
<dbReference type="SMR" id="O47426"/>
<dbReference type="FunCoup" id="O47426">
    <property type="interactions" value="10"/>
</dbReference>
<dbReference type="STRING" id="7739.O47426"/>
<dbReference type="GeneID" id="808729"/>
<dbReference type="KEGG" id="bfo:808729"/>
<dbReference type="CTD" id="4508"/>
<dbReference type="InParanoid" id="O47426"/>
<dbReference type="OMA" id="FFDQFMS"/>
<dbReference type="OrthoDB" id="5976622at2759"/>
<dbReference type="Proteomes" id="UP000001554">
    <property type="component" value="Mitochondrion MT"/>
</dbReference>
<dbReference type="GO" id="GO:0005743">
    <property type="term" value="C:mitochondrial inner membrane"/>
    <property type="evidence" value="ECO:0007669"/>
    <property type="project" value="UniProtKB-SubCell"/>
</dbReference>
<dbReference type="GO" id="GO:0045259">
    <property type="term" value="C:proton-transporting ATP synthase complex"/>
    <property type="evidence" value="ECO:0000318"/>
    <property type="project" value="GO_Central"/>
</dbReference>
<dbReference type="GO" id="GO:0015078">
    <property type="term" value="F:proton transmembrane transporter activity"/>
    <property type="evidence" value="ECO:0007669"/>
    <property type="project" value="InterPro"/>
</dbReference>
<dbReference type="GO" id="GO:0015986">
    <property type="term" value="P:proton motive force-driven ATP synthesis"/>
    <property type="evidence" value="ECO:0000318"/>
    <property type="project" value="GO_Central"/>
</dbReference>
<dbReference type="CDD" id="cd00310">
    <property type="entry name" value="ATP-synt_Fo_a_6"/>
    <property type="match status" value="1"/>
</dbReference>
<dbReference type="Gene3D" id="1.20.120.220">
    <property type="entry name" value="ATP synthase, F0 complex, subunit A"/>
    <property type="match status" value="1"/>
</dbReference>
<dbReference type="InterPro" id="IPR000568">
    <property type="entry name" value="ATP_synth_F0_asu"/>
</dbReference>
<dbReference type="InterPro" id="IPR023011">
    <property type="entry name" value="ATP_synth_F0_asu_AS"/>
</dbReference>
<dbReference type="InterPro" id="IPR045083">
    <property type="entry name" value="ATP_synth_F0_asu_bact/mt"/>
</dbReference>
<dbReference type="InterPro" id="IPR035908">
    <property type="entry name" value="F0_ATP_A_sf"/>
</dbReference>
<dbReference type="NCBIfam" id="TIGR01131">
    <property type="entry name" value="ATP_synt_6_or_A"/>
    <property type="match status" value="1"/>
</dbReference>
<dbReference type="PANTHER" id="PTHR11410">
    <property type="entry name" value="ATP SYNTHASE SUBUNIT A"/>
    <property type="match status" value="1"/>
</dbReference>
<dbReference type="PANTHER" id="PTHR11410:SF0">
    <property type="entry name" value="ATP SYNTHASE SUBUNIT A"/>
    <property type="match status" value="1"/>
</dbReference>
<dbReference type="Pfam" id="PF00119">
    <property type="entry name" value="ATP-synt_A"/>
    <property type="match status" value="1"/>
</dbReference>
<dbReference type="PRINTS" id="PR00123">
    <property type="entry name" value="ATPASEA"/>
</dbReference>
<dbReference type="SUPFAM" id="SSF81336">
    <property type="entry name" value="F1F0 ATP synthase subunit A"/>
    <property type="match status" value="1"/>
</dbReference>
<dbReference type="PROSITE" id="PS00449">
    <property type="entry name" value="ATPASE_A"/>
    <property type="match status" value="1"/>
</dbReference>
<proteinExistence type="inferred from homology"/>
<organism>
    <name type="scientific">Branchiostoma floridae</name>
    <name type="common">Florida lancelet</name>
    <name type="synonym">Amphioxus</name>
    <dbReference type="NCBI Taxonomy" id="7739"/>
    <lineage>
        <taxon>Eukaryota</taxon>
        <taxon>Metazoa</taxon>
        <taxon>Chordata</taxon>
        <taxon>Cephalochordata</taxon>
        <taxon>Leptocardii</taxon>
        <taxon>Amphioxiformes</taxon>
        <taxon>Branchiostomatidae</taxon>
        <taxon>Branchiostoma</taxon>
    </lineage>
</organism>
<keyword id="KW-0066">ATP synthesis</keyword>
<keyword id="KW-0138">CF(0)</keyword>
<keyword id="KW-0375">Hydrogen ion transport</keyword>
<keyword id="KW-0406">Ion transport</keyword>
<keyword id="KW-0472">Membrane</keyword>
<keyword id="KW-0496">Mitochondrion</keyword>
<keyword id="KW-0999">Mitochondrion inner membrane</keyword>
<keyword id="KW-1185">Reference proteome</keyword>
<keyword id="KW-0812">Transmembrane</keyword>
<keyword id="KW-1133">Transmembrane helix</keyword>
<keyword id="KW-0813">Transport</keyword>
<evidence type="ECO:0000250" key="1"/>
<evidence type="ECO:0000255" key="2"/>
<evidence type="ECO:0000305" key="3"/>
<evidence type="ECO:0000312" key="4">
    <source>
        <dbReference type="Proteomes" id="UP000001554"/>
    </source>
</evidence>
<comment type="function">
    <text>Mitochondrial membrane ATP synthase (F(1)F(0) ATP synthase or Complex V) produces ATP from ADP in the presence of a proton gradient across the membrane which is generated by electron transport complexes of the respiratory chain. F-type ATPases consist of two structural domains, F(1) - containing the extramembraneous catalytic core and F(0) - containing the membrane proton channel, linked together by a central stalk and a peripheral stalk. During catalysis, ATP synthesis in the catalytic domain of F(1) is coupled via a rotary mechanism of the central stalk subunits to proton translocation. Key component of the proton channel; it may play a direct role in the translocation of protons across the membrane.</text>
</comment>
<comment type="subunit">
    <text evidence="1">F-type ATPases have 2 components, CF(1) - the catalytic core - and CF(0) - the membrane proton channel. CF(1) has five subunits: alpha(3), beta(3), gamma(1), delta(1), epsilon(1). CF(0) has three main subunits: a, b and c (By similarity).</text>
</comment>
<comment type="subcellular location">
    <subcellularLocation>
        <location>Mitochondrion inner membrane</location>
        <topology>Multi-pass membrane protein</topology>
    </subcellularLocation>
</comment>
<comment type="similarity">
    <text evidence="3">Belongs to the ATPase A chain family.</text>
</comment>